<dbReference type="EMBL" id="AJ311521">
    <property type="protein sequence ID" value="CAC70635.1"/>
    <property type="molecule type" value="Genomic_RNA"/>
</dbReference>
<dbReference type="EMBL" id="U04608">
    <property type="status" value="NOT_ANNOTATED_CDS"/>
    <property type="molecule type" value="Genomic_RNA"/>
</dbReference>
<dbReference type="RefSeq" id="YP_009272535.1">
    <property type="nucleotide sequence ID" value="NC_001607.1"/>
</dbReference>
<dbReference type="Proteomes" id="UP000007804">
    <property type="component" value="Segment"/>
</dbReference>
<dbReference type="Proteomes" id="UP000124375">
    <property type="component" value="Genome"/>
</dbReference>
<dbReference type="GO" id="GO:0033650">
    <property type="term" value="C:host cell mitochondrion"/>
    <property type="evidence" value="ECO:0000314"/>
    <property type="project" value="UniProtKB"/>
</dbReference>
<dbReference type="GO" id="GO:0042025">
    <property type="term" value="C:host cell nucleus"/>
    <property type="evidence" value="ECO:0007669"/>
    <property type="project" value="UniProtKB-SubCell"/>
</dbReference>
<dbReference type="GO" id="GO:0033668">
    <property type="term" value="P:symbiont-mediated suppression of host apoptosis"/>
    <property type="evidence" value="ECO:0000314"/>
    <property type="project" value="UniProtKB"/>
</dbReference>
<dbReference type="InterPro" id="IPR009485">
    <property type="entry name" value="BDV_P10"/>
</dbReference>
<dbReference type="Pfam" id="PF06515">
    <property type="entry name" value="BDV_P10"/>
    <property type="match status" value="1"/>
</dbReference>
<organism>
    <name type="scientific">Borna disease virus (strain V)</name>
    <name type="common">BDV</name>
    <dbReference type="NCBI Taxonomy" id="928296"/>
    <lineage>
        <taxon>Viruses</taxon>
        <taxon>Riboviria</taxon>
        <taxon>Orthornavirae</taxon>
        <taxon>Negarnaviricota</taxon>
        <taxon>Haploviricotina</taxon>
        <taxon>Monjiviricetes</taxon>
        <taxon>Mononegavirales</taxon>
        <taxon>Bornaviridae</taxon>
        <taxon>Borna disease virus</taxon>
    </lineage>
</organism>
<keyword id="KW-1045">Host mitochondrion</keyword>
<keyword id="KW-1048">Host nucleus</keyword>
<keyword id="KW-0945">Host-virus interaction</keyword>
<keyword id="KW-1119">Modulation of host cell apoptosis by virus</keyword>
<keyword id="KW-0597">Phosphoprotein</keyword>
<keyword id="KW-1185">Reference proteome</keyword>
<reference key="1">
    <citation type="journal article" date="1994" name="Proc. Natl. Acad. Sci. U.S.A.">
        <title>Genomic organization of Borna disease virus.</title>
        <authorList>
            <person name="Briese T."/>
            <person name="Schneemann A."/>
            <person name="Lewis A.J."/>
            <person name="Park Y.-S."/>
            <person name="Kim S."/>
            <person name="Ludwig H."/>
            <person name="Lipkin W.I."/>
        </authorList>
    </citation>
    <scope>NUCLEOTIDE SEQUENCE [GENOMIC RNA]</scope>
</reference>
<reference key="2">
    <citation type="journal article" date="2001" name="J. Gen. Virol.">
        <title>Conservation of coding potential and terminal sequences in four different isolates of Borna disease virus.</title>
        <authorList>
            <person name="Pleschka S."/>
            <person name="Staeheli P."/>
            <person name="Kolodziejek J."/>
            <person name="Richt J.A."/>
            <person name="Nowotny N."/>
            <person name="Schwemmle M."/>
        </authorList>
    </citation>
    <scope>NUCLEOTIDE SEQUENCE [GENOMIC RNA]</scope>
    <source>
        <strain>V/FR</strain>
    </source>
</reference>
<reference key="3">
    <citation type="journal article" date="2000" name="J. Virol.">
        <title>Characterization of the P protein-binding domain on the 10-kilodalton protein of Borna disease virus.</title>
        <authorList>
            <person name="Malik T.H."/>
            <person name="Kishi M."/>
            <person name="Lai P.K."/>
        </authorList>
    </citation>
    <scope>INTERACTION WITH P PROTEIN</scope>
</reference>
<reference key="4">
    <citation type="journal article" date="2000" name="J. Gen. Virol.">
        <title>A short leucine-rich sequence in the Borna disease virus p10 protein mediates association with the viral phospho- and nucleoproteins.</title>
        <authorList>
            <person name="Wolff T."/>
            <person name="Pfleger R."/>
            <person name="Wehner T."/>
            <person name="Reinhardt J."/>
            <person name="Richt J.A."/>
        </authorList>
    </citation>
    <scope>MUTAGENESIS OF 2-SER-SER-3; 4-ASP-LEU-5; 6-ARG-LEU-7; 7-LEU--LEU-10; 8-THR-LEU-9; 10-LEU-GLU-11; 12-LEU-GLU-13; 14-ARG-ARG-15; 16-LEU-ASN-17; 18-GLY-ASN-19 AND THR-21</scope>
    <source>
        <strain>He/80</strain>
    </source>
</reference>
<reference key="5">
    <citation type="journal article" date="2002" name="Front. Biosci.">
        <title>Borna disease virus and infection in humans.</title>
        <authorList>
            <person name="Ikuta K."/>
            <person name="Ibrahim M.S."/>
            <person name="Kobayashi T."/>
            <person name="Tomonaga K."/>
        </authorList>
    </citation>
    <scope>REVIEW</scope>
</reference>
<reference key="6">
    <citation type="journal article" date="2009" name="J. Virol.">
        <title>Protein X of Borna disease virus inhibits apoptosis and promotes viral persistence in the central nervous systems of newborn-infected rats.</title>
        <authorList>
            <person name="Poenisch M."/>
            <person name="Burger N."/>
            <person name="Staeheli P."/>
            <person name="Bauer G."/>
            <person name="Schneider U."/>
        </authorList>
    </citation>
    <scope>FUNCTION</scope>
    <scope>SUBCELLULAR LOCATION</scope>
</reference>
<reference key="7">
    <citation type="journal article" date="2013" name="Int. J. Biochem. Cell Biol.">
        <title>MAVS-mediated host cell defense is inhibited by Borna disease virus.</title>
        <authorList>
            <person name="Li Y."/>
            <person name="Song W."/>
            <person name="Wu J."/>
            <person name="Zhang Q."/>
            <person name="He J."/>
            <person name="Li A."/>
            <person name="Qian J."/>
            <person name="Zhai A."/>
            <person name="Hu Y."/>
            <person name="Kao W."/>
            <person name="Wei L."/>
            <person name="Zhang F."/>
            <person name="Xu D."/>
        </authorList>
    </citation>
    <scope>FUNCTION</scope>
    <scope>SUBCELLULAR LOCATION</scope>
    <scope>INTERACTION WITH HOST MAVS</scope>
</reference>
<reference key="8">
    <citation type="journal article" date="2014" name="Nat. Commun.">
        <title>A viral peptide that targets mitochondria protects against neuronal degeneration in models of Parkinson's disease.</title>
        <authorList>
            <person name="Szelechowski M."/>
            <person name="Betourne A."/>
            <person name="Monnet Y."/>
            <person name="Ferre C.A."/>
            <person name="Thouard A."/>
            <person name="Foret C."/>
            <person name="Peyrin J.M."/>
            <person name="Hunot S."/>
            <person name="Gonzalez-Dunia D."/>
        </authorList>
    </citation>
    <scope>FUNCTION</scope>
</reference>
<reference key="9">
    <citation type="journal article" date="2016" name="FASEB J.">
        <title>Manipulation of the N-terminal sequence of the Borna disease virus X protein improves its mitochondrial targeting and neuroprotective potential.</title>
        <authorList>
            <person name="Ferre C.A."/>
            <person name="Davezac N."/>
            <person name="Thouard A."/>
            <person name="Peyrin J.M."/>
            <person name="Belenguer P."/>
            <person name="Miquel M.C."/>
            <person name="Gonzalez-Dunia D."/>
            <person name="Szelechowski M."/>
        </authorList>
    </citation>
    <scope>SUBCELLULAR LOCATION</scope>
    <scope>REGION</scope>
    <scope>FUNCTION</scope>
</reference>
<sequence>MSSDLRLTLLELVRRLNGNATIESGRLPGGRRRSPDTTTGTTGVTKTTEGPKECIDPTSRPAPEGPQEEPLHDLRPRPANRKGAAVE</sequence>
<proteinExistence type="evidence at protein level"/>
<accession>P0DOF0</accession>
<accession>Q8JJK0</accession>
<accession>Q912Z9</accession>
<evidence type="ECO:0000256" key="1">
    <source>
        <dbReference type="SAM" id="MobiDB-lite"/>
    </source>
</evidence>
<evidence type="ECO:0000269" key="2">
    <source>
    </source>
</evidence>
<evidence type="ECO:0000269" key="3">
    <source>
    </source>
</evidence>
<evidence type="ECO:0000269" key="4">
    <source>
    </source>
</evidence>
<evidence type="ECO:0000269" key="5">
    <source>
    </source>
</evidence>
<evidence type="ECO:0000269" key="6">
    <source>
    </source>
</evidence>
<evidence type="ECO:0000269" key="7">
    <source>
    </source>
</evidence>
<name>X_BDVV</name>
<feature type="chain" id="PRO_0000079208" description="X protein">
    <location>
        <begin position="1"/>
        <end position="87"/>
    </location>
</feature>
<feature type="region of interest" description="Nuclear export signal" evidence="7">
    <location>
        <begin position="5"/>
        <end position="16"/>
    </location>
</feature>
<feature type="region of interest" description="Disordered" evidence="1">
    <location>
        <begin position="18"/>
        <end position="87"/>
    </location>
</feature>
<feature type="compositionally biased region" description="Low complexity" evidence="1">
    <location>
        <begin position="36"/>
        <end position="48"/>
    </location>
</feature>
<feature type="sequence variant" description="In strain: Isolate CRNP5, Isolate CRP3B and isolate CRP3A.">
    <original>A</original>
    <variation>G</variation>
    <location>
        <position position="20"/>
    </location>
</feature>
<feature type="sequence variant" description="In strain: Isolate CRNP5, Isolate CRP3B and isolate CRP3A.">
    <original>T</original>
    <variation>I</variation>
    <location>
        <position position="42"/>
    </location>
</feature>
<feature type="sequence variant" description="In strain: Isolate CRNP5, Isolate CRP3B and isolate CRP3A.">
    <original>G</original>
    <variation>D</variation>
    <location>
        <position position="50"/>
    </location>
</feature>
<feature type="sequence variant" description="In strain: Isolate CRNP5, Isolate CRP3B and isolate CRP3A.">
    <original>S</original>
    <variation>G</variation>
    <location>
        <position position="59"/>
    </location>
</feature>
<feature type="sequence variant" description="In strain: Isolate CRNP5, Isolate CRP3B and isolate CRP3A.">
    <original>V</original>
    <variation>I</variation>
    <location>
        <position position="86"/>
    </location>
</feature>
<feature type="mutagenesis site" description="No effect on interaction with P protein." evidence="3">
    <original>SS</original>
    <variation>AA</variation>
    <location>
        <begin position="2"/>
        <end position="3"/>
    </location>
</feature>
<feature type="mutagenesis site" description="No effect on interaction with P protein." evidence="3">
    <original>DL</original>
    <variation>AA</variation>
    <location>
        <begin position="4"/>
        <end position="5"/>
    </location>
</feature>
<feature type="mutagenesis site" description="No effect on interaction with P protein." evidence="3">
    <original>RL</original>
    <variation>AA</variation>
    <location>
        <begin position="6"/>
        <end position="7"/>
    </location>
</feature>
<feature type="mutagenesis site" description="Complete loss of interaction with P protein." evidence="3">
    <original>LTLL</original>
    <variation>ATAA</variation>
    <location>
        <begin position="7"/>
        <end position="10"/>
    </location>
</feature>
<feature type="mutagenesis site" description="Complete loss of interaction with P protein." evidence="3">
    <original>TL</original>
    <variation>AA</variation>
    <location>
        <begin position="8"/>
        <end position="9"/>
    </location>
</feature>
<feature type="mutagenesis site" description="Complete loss of interaction with P protein." evidence="3">
    <original>LE</original>
    <variation>AA</variation>
    <location>
        <begin position="10"/>
        <end position="11"/>
    </location>
</feature>
<feature type="mutagenesis site" description="Partial loss of interaction with P protein." evidence="3">
    <original>LV</original>
    <variation>AA</variation>
    <location>
        <begin position="12"/>
        <end position="13"/>
    </location>
</feature>
<feature type="mutagenesis site" description="Complete loss of interaction with P protein." evidence="3">
    <original>RR</original>
    <variation>AA</variation>
    <location>
        <begin position="14"/>
        <end position="15"/>
    </location>
</feature>
<feature type="mutagenesis site" description="No effect on interaction with P protein." evidence="3">
    <original>LN</original>
    <variation>AA</variation>
    <location>
        <begin position="16"/>
        <end position="17"/>
    </location>
</feature>
<feature type="mutagenesis site" description="No effect on interaction with P protein." evidence="3">
    <original>GN</original>
    <variation>AA</variation>
    <location>
        <begin position="18"/>
        <end position="19"/>
    </location>
</feature>
<feature type="mutagenesis site" description="No effect on interaction with P protein." evidence="3">
    <original>T</original>
    <variation>A</variation>
    <location>
        <position position="21"/>
    </location>
</feature>
<protein>
    <recommendedName>
        <fullName>X protein</fullName>
    </recommendedName>
    <alternativeName>
        <fullName>p10</fullName>
    </alternativeName>
</protein>
<organismHost>
    <name type="scientific">Bos taurus</name>
    <name type="common">Bovine</name>
    <dbReference type="NCBI Taxonomy" id="9913"/>
</organismHost>
<organismHost>
    <name type="scientific">Bradypodidae</name>
    <name type="common">three-fingered sloths</name>
    <dbReference type="NCBI Taxonomy" id="9352"/>
</organismHost>
<organismHost>
    <name type="scientific">Capra hircus</name>
    <name type="common">Goat</name>
    <dbReference type="NCBI Taxonomy" id="9925"/>
</organismHost>
<organismHost>
    <name type="scientific">Cervidae</name>
    <name type="common">Deer</name>
    <dbReference type="NCBI Taxonomy" id="9850"/>
</organismHost>
<organismHost>
    <name type="scientific">Crocidura leucodon</name>
    <name type="common">Bicoloured white-toothed shrew</name>
    <name type="synonym">Celebes shrew</name>
    <dbReference type="NCBI Taxonomy" id="109474"/>
</organismHost>
<organismHost>
    <name type="scientific">Equidae</name>
    <name type="common">horses</name>
    <dbReference type="NCBI Taxonomy" id="9788"/>
</organismHost>
<organismHost>
    <name type="scientific">Felis catus</name>
    <name type="common">Cat</name>
    <name type="synonym">Felis silvestris catus</name>
    <dbReference type="NCBI Taxonomy" id="9685"/>
</organismHost>
<organismHost>
    <name type="scientific">Hexaprotodon liberiensis</name>
    <name type="common">Pygmy hippopotamus</name>
    <name type="synonym">Choeropsis liberiensis</name>
    <dbReference type="NCBI Taxonomy" id="56798"/>
</organismHost>
<organismHost>
    <name type="scientific">Lama glama</name>
    <name type="common">Llama</name>
    <dbReference type="NCBI Taxonomy" id="9844"/>
</organismHost>
<organismHost>
    <name type="scientific">Oryctolagus cuniculus</name>
    <name type="common">Rabbit</name>
    <dbReference type="NCBI Taxonomy" id="9986"/>
</organismHost>
<organismHost>
    <name type="scientific">Ovis aries</name>
    <name type="common">Sheep</name>
    <dbReference type="NCBI Taxonomy" id="9940"/>
</organismHost>
<organismHost>
    <name type="scientific">Struthio camelus</name>
    <name type="common">Common ostrich</name>
    <dbReference type="NCBI Taxonomy" id="8801"/>
</organismHost>
<organismHost>
    <name type="scientific">Varecia variegata</name>
    <name type="common">Black-and-white ruffed lemur</name>
    <name type="synonym">Lemur variegatus</name>
    <dbReference type="NCBI Taxonomy" id="9455"/>
</organismHost>
<organismHost>
    <name type="scientific">Vicugna pacos</name>
    <name type="common">Alpaca</name>
    <name type="synonym">Lama pacos</name>
    <dbReference type="NCBI Taxonomy" id="30538"/>
</organismHost>
<comment type="function">
    <text evidence="4 5 6 7">Plays an essential role in the inhibition of host apoptosis. Mediates host mitochondria-mediated apoptosis through interaction with the mitochondrial antiviral signaling protein/MAVS and thereby promotes viral persistence in host central nervous system. Within the host nucleus, regulates viral RNA synthesis and polymerase complex assembly.</text>
</comment>
<comment type="subunit">
    <text evidence="2 5">Interacts with P and N proteins. These interactions presumably promote nuclear targeting of the X protein in infected cells (PubMed:10708460). Interacts with host MAVS; this interaction inhibits MAVS-induced apoptosis (PubMed:23702035).</text>
</comment>
<comment type="subcellular location">
    <subcellularLocation>
        <location>Host nucleus</location>
    </subcellularLocation>
    <subcellularLocation>
        <location evidence="4 5 7">Host mitochondrion</location>
    </subcellularLocation>
</comment>
<comment type="PTM">
    <text>Phosphorylated.</text>
</comment>
<comment type="miscellaneous">
    <text>The P/X gene has 2 overlapping open reading frames. One encodes the P protein and the other the X protein. The p24, X and p16 proteins are produced by ribosomal leaky scanning.</text>
</comment>
<gene>
    <name type="primary">P/X</name>
</gene>